<organism>
    <name type="scientific">Mycolicibacterium paratuberculosis (strain ATCC BAA-968 / K-10)</name>
    <name type="common">Mycobacterium paratuberculosis</name>
    <dbReference type="NCBI Taxonomy" id="262316"/>
    <lineage>
        <taxon>Bacteria</taxon>
        <taxon>Bacillati</taxon>
        <taxon>Actinomycetota</taxon>
        <taxon>Actinomycetes</taxon>
        <taxon>Mycobacteriales</taxon>
        <taxon>Mycobacteriaceae</taxon>
        <taxon>Mycobacterium</taxon>
        <taxon>Mycobacterium avium complex (MAC)</taxon>
    </lineage>
</organism>
<protein>
    <recommendedName>
        <fullName evidence="1">UDP-N-acetylglucosamine 1-carboxyvinyltransferase</fullName>
        <ecNumber evidence="1">2.5.1.7</ecNumber>
    </recommendedName>
    <alternativeName>
        <fullName evidence="1">Enoylpyruvate transferase</fullName>
    </alternativeName>
    <alternativeName>
        <fullName evidence="1">UDP-N-acetylglucosamine enolpyruvyl transferase</fullName>
        <shortName evidence="1">EPT</shortName>
    </alternativeName>
</protein>
<name>MURA_MYCPA</name>
<sequence>MAERFVVTGGNRLSGEVAVGGAKNSVLKLMAATLLAEGTSTITNCPDILDVPLMAEVLRGLGATVELDGDVARITSPDEPKYDADFAAVRQFRASVCVLGPLVGRCKRARVALPGGDAIGSRPLDMHQAGLRQLGATCNIEHGCVVAQADTLRGAEIQLEFPSVGATENILMAAVVAEGVTTIHNAAREPDVVDLCTMLNQMGAQVEGAGSPTMTITGVPRLYPTEHRVIGDRIVAATWGIAAAMTRGDISVTGVDPAHLQVVLHKLHDAGATVTQTDDSFRVTQYERPKAVNVATLPFPGFPTDLQPMAIALASIADGTSMITENVFEARFRFVEEMIRLGADARTDGHHAVVRGLPQLSSAPVWCSDIRAGAGLVLAGLVADGDTEVHDVFHIDRGYPLFVENLAILGAEIERVE</sequence>
<proteinExistence type="inferred from homology"/>
<dbReference type="EC" id="2.5.1.7" evidence="1"/>
<dbReference type="EMBL" id="AE016958">
    <property type="protein sequence ID" value="AAS04764.1"/>
    <property type="molecule type" value="Genomic_DNA"/>
</dbReference>
<dbReference type="RefSeq" id="WP_003877298.1">
    <property type="nucleotide sequence ID" value="NZ_CP106873.1"/>
</dbReference>
<dbReference type="SMR" id="Q73X63"/>
<dbReference type="STRING" id="262316.MAP_2447c"/>
<dbReference type="GeneID" id="75269293"/>
<dbReference type="KEGG" id="mpa:MAP_2447c"/>
<dbReference type="eggNOG" id="COG0766">
    <property type="taxonomic scope" value="Bacteria"/>
</dbReference>
<dbReference type="HOGENOM" id="CLU_027387_0_0_11"/>
<dbReference type="UniPathway" id="UPA00219"/>
<dbReference type="Proteomes" id="UP000000580">
    <property type="component" value="Chromosome"/>
</dbReference>
<dbReference type="GO" id="GO:0005737">
    <property type="term" value="C:cytoplasm"/>
    <property type="evidence" value="ECO:0007669"/>
    <property type="project" value="UniProtKB-SubCell"/>
</dbReference>
<dbReference type="GO" id="GO:0008760">
    <property type="term" value="F:UDP-N-acetylglucosamine 1-carboxyvinyltransferase activity"/>
    <property type="evidence" value="ECO:0007669"/>
    <property type="project" value="UniProtKB-UniRule"/>
</dbReference>
<dbReference type="GO" id="GO:0051301">
    <property type="term" value="P:cell division"/>
    <property type="evidence" value="ECO:0007669"/>
    <property type="project" value="UniProtKB-KW"/>
</dbReference>
<dbReference type="GO" id="GO:0071555">
    <property type="term" value="P:cell wall organization"/>
    <property type="evidence" value="ECO:0007669"/>
    <property type="project" value="UniProtKB-KW"/>
</dbReference>
<dbReference type="GO" id="GO:0009252">
    <property type="term" value="P:peptidoglycan biosynthetic process"/>
    <property type="evidence" value="ECO:0007669"/>
    <property type="project" value="UniProtKB-UniRule"/>
</dbReference>
<dbReference type="GO" id="GO:0008360">
    <property type="term" value="P:regulation of cell shape"/>
    <property type="evidence" value="ECO:0007669"/>
    <property type="project" value="UniProtKB-KW"/>
</dbReference>
<dbReference type="GO" id="GO:0019277">
    <property type="term" value="P:UDP-N-acetylgalactosamine biosynthetic process"/>
    <property type="evidence" value="ECO:0007669"/>
    <property type="project" value="InterPro"/>
</dbReference>
<dbReference type="CDD" id="cd01555">
    <property type="entry name" value="UdpNAET"/>
    <property type="match status" value="1"/>
</dbReference>
<dbReference type="Gene3D" id="3.65.10.10">
    <property type="entry name" value="Enolpyruvate transferase domain"/>
    <property type="match status" value="2"/>
</dbReference>
<dbReference type="HAMAP" id="MF_00111">
    <property type="entry name" value="MurA"/>
    <property type="match status" value="1"/>
</dbReference>
<dbReference type="InterPro" id="IPR001986">
    <property type="entry name" value="Enolpyruvate_Tfrase_dom"/>
</dbReference>
<dbReference type="InterPro" id="IPR036968">
    <property type="entry name" value="Enolpyruvate_Tfrase_sf"/>
</dbReference>
<dbReference type="InterPro" id="IPR050068">
    <property type="entry name" value="MurA_subfamily"/>
</dbReference>
<dbReference type="InterPro" id="IPR013792">
    <property type="entry name" value="RNA3'P_cycl/enolpyr_Trfase_a/b"/>
</dbReference>
<dbReference type="InterPro" id="IPR005750">
    <property type="entry name" value="UDP_GlcNAc_COvinyl_MurA"/>
</dbReference>
<dbReference type="NCBIfam" id="TIGR01072">
    <property type="entry name" value="murA"/>
    <property type="match status" value="1"/>
</dbReference>
<dbReference type="NCBIfam" id="NF006873">
    <property type="entry name" value="PRK09369.1"/>
    <property type="match status" value="1"/>
</dbReference>
<dbReference type="PANTHER" id="PTHR43783">
    <property type="entry name" value="UDP-N-ACETYLGLUCOSAMINE 1-CARBOXYVINYLTRANSFERASE"/>
    <property type="match status" value="1"/>
</dbReference>
<dbReference type="PANTHER" id="PTHR43783:SF1">
    <property type="entry name" value="UDP-N-ACETYLGLUCOSAMINE 1-CARBOXYVINYLTRANSFERASE"/>
    <property type="match status" value="1"/>
</dbReference>
<dbReference type="Pfam" id="PF00275">
    <property type="entry name" value="EPSP_synthase"/>
    <property type="match status" value="1"/>
</dbReference>
<dbReference type="SUPFAM" id="SSF55205">
    <property type="entry name" value="EPT/RTPC-like"/>
    <property type="match status" value="1"/>
</dbReference>
<comment type="function">
    <text evidence="1">Cell wall formation. Adds enolpyruvyl to UDP-N-acetylglucosamine.</text>
</comment>
<comment type="catalytic activity">
    <reaction evidence="1">
        <text>phosphoenolpyruvate + UDP-N-acetyl-alpha-D-glucosamine = UDP-N-acetyl-3-O-(1-carboxyvinyl)-alpha-D-glucosamine + phosphate</text>
        <dbReference type="Rhea" id="RHEA:18681"/>
        <dbReference type="ChEBI" id="CHEBI:43474"/>
        <dbReference type="ChEBI" id="CHEBI:57705"/>
        <dbReference type="ChEBI" id="CHEBI:58702"/>
        <dbReference type="ChEBI" id="CHEBI:68483"/>
        <dbReference type="EC" id="2.5.1.7"/>
    </reaction>
</comment>
<comment type="pathway">
    <text evidence="1">Cell wall biogenesis; peptidoglycan biosynthesis.</text>
</comment>
<comment type="subcellular location">
    <subcellularLocation>
        <location evidence="1">Cytoplasm</location>
    </subcellularLocation>
</comment>
<comment type="similarity">
    <text evidence="1">Belongs to the EPSP synthase family. MurA subfamily.</text>
</comment>
<evidence type="ECO:0000255" key="1">
    <source>
        <dbReference type="HAMAP-Rule" id="MF_00111"/>
    </source>
</evidence>
<accession>Q73X63</accession>
<reference key="1">
    <citation type="journal article" date="2005" name="Proc. Natl. Acad. Sci. U.S.A.">
        <title>The complete genome sequence of Mycobacterium avium subspecies paratuberculosis.</title>
        <authorList>
            <person name="Li L."/>
            <person name="Bannantine J.P."/>
            <person name="Zhang Q."/>
            <person name="Amonsin A."/>
            <person name="May B.J."/>
            <person name="Alt D."/>
            <person name="Banerji N."/>
            <person name="Kanjilal S."/>
            <person name="Kapur V."/>
        </authorList>
    </citation>
    <scope>NUCLEOTIDE SEQUENCE [LARGE SCALE GENOMIC DNA]</scope>
    <source>
        <strain>ATCC BAA-968 / K-10</strain>
    </source>
</reference>
<gene>
    <name evidence="1" type="primary">murA</name>
    <name type="ordered locus">MAP_2447c</name>
</gene>
<keyword id="KW-0131">Cell cycle</keyword>
<keyword id="KW-0132">Cell division</keyword>
<keyword id="KW-0133">Cell shape</keyword>
<keyword id="KW-0961">Cell wall biogenesis/degradation</keyword>
<keyword id="KW-0963">Cytoplasm</keyword>
<keyword id="KW-0573">Peptidoglycan synthesis</keyword>
<keyword id="KW-1185">Reference proteome</keyword>
<keyword id="KW-0808">Transferase</keyword>
<feature type="chain" id="PRO_0000231224" description="UDP-N-acetylglucosamine 1-carboxyvinyltransferase">
    <location>
        <begin position="1"/>
        <end position="417"/>
    </location>
</feature>
<feature type="active site" description="Proton donor" evidence="1">
    <location>
        <position position="117"/>
    </location>
</feature>
<feature type="binding site" evidence="1">
    <location>
        <begin position="23"/>
        <end position="24"/>
    </location>
    <ligand>
        <name>phosphoenolpyruvate</name>
        <dbReference type="ChEBI" id="CHEBI:58702"/>
    </ligand>
</feature>
<feature type="binding site" evidence="1">
    <location>
        <position position="93"/>
    </location>
    <ligand>
        <name>UDP-N-acetyl-alpha-D-glucosamine</name>
        <dbReference type="ChEBI" id="CHEBI:57705"/>
    </ligand>
</feature>
<feature type="binding site" evidence="1">
    <location>
        <position position="305"/>
    </location>
    <ligand>
        <name>UDP-N-acetyl-alpha-D-glucosamine</name>
        <dbReference type="ChEBI" id="CHEBI:57705"/>
    </ligand>
</feature>
<feature type="binding site" evidence="1">
    <location>
        <position position="327"/>
    </location>
    <ligand>
        <name>UDP-N-acetyl-alpha-D-glucosamine</name>
        <dbReference type="ChEBI" id="CHEBI:57705"/>
    </ligand>
</feature>